<gene>
    <name evidence="1" type="primary">rplO</name>
    <name type="ordered locus">SAG0077</name>
</gene>
<accession>Q8E2B5</accession>
<feature type="chain" id="PRO_0000104820" description="Large ribosomal subunit protein uL15">
    <location>
        <begin position="1"/>
        <end position="146"/>
    </location>
</feature>
<feature type="region of interest" description="Disordered" evidence="2">
    <location>
        <begin position="1"/>
        <end position="59"/>
    </location>
</feature>
<feature type="compositionally biased region" description="Basic and acidic residues" evidence="2">
    <location>
        <begin position="1"/>
        <end position="13"/>
    </location>
</feature>
<feature type="compositionally biased region" description="Gly residues" evidence="2">
    <location>
        <begin position="23"/>
        <end position="35"/>
    </location>
</feature>
<feature type="compositionally biased region" description="Gly residues" evidence="2">
    <location>
        <begin position="42"/>
        <end position="52"/>
    </location>
</feature>
<keyword id="KW-1185">Reference proteome</keyword>
<keyword id="KW-0687">Ribonucleoprotein</keyword>
<keyword id="KW-0689">Ribosomal protein</keyword>
<keyword id="KW-0694">RNA-binding</keyword>
<keyword id="KW-0699">rRNA-binding</keyword>
<protein>
    <recommendedName>
        <fullName evidence="1">Large ribosomal subunit protein uL15</fullName>
    </recommendedName>
    <alternativeName>
        <fullName evidence="3">50S ribosomal protein L15</fullName>
    </alternativeName>
</protein>
<evidence type="ECO:0000255" key="1">
    <source>
        <dbReference type="HAMAP-Rule" id="MF_01341"/>
    </source>
</evidence>
<evidence type="ECO:0000256" key="2">
    <source>
        <dbReference type="SAM" id="MobiDB-lite"/>
    </source>
</evidence>
<evidence type="ECO:0000305" key="3"/>
<reference key="1">
    <citation type="journal article" date="2002" name="Proc. Natl. Acad. Sci. U.S.A.">
        <title>Complete genome sequence and comparative genomic analysis of an emerging human pathogen, serotype V Streptococcus agalactiae.</title>
        <authorList>
            <person name="Tettelin H."/>
            <person name="Masignani V."/>
            <person name="Cieslewicz M.J."/>
            <person name="Eisen J.A."/>
            <person name="Peterson S.N."/>
            <person name="Wessels M.R."/>
            <person name="Paulsen I.T."/>
            <person name="Nelson K.E."/>
            <person name="Margarit I."/>
            <person name="Read T.D."/>
            <person name="Madoff L.C."/>
            <person name="Wolf A.M."/>
            <person name="Beanan M.J."/>
            <person name="Brinkac L.M."/>
            <person name="Daugherty S.C."/>
            <person name="DeBoy R.T."/>
            <person name="Durkin A.S."/>
            <person name="Kolonay J.F."/>
            <person name="Madupu R."/>
            <person name="Lewis M.R."/>
            <person name="Radune D."/>
            <person name="Fedorova N.B."/>
            <person name="Scanlan D."/>
            <person name="Khouri H.M."/>
            <person name="Mulligan S."/>
            <person name="Carty H.A."/>
            <person name="Cline R.T."/>
            <person name="Van Aken S.E."/>
            <person name="Gill J."/>
            <person name="Scarselli M."/>
            <person name="Mora M."/>
            <person name="Iacobini E.T."/>
            <person name="Brettoni C."/>
            <person name="Galli G."/>
            <person name="Mariani M."/>
            <person name="Vegni F."/>
            <person name="Maione D."/>
            <person name="Rinaudo D."/>
            <person name="Rappuoli R."/>
            <person name="Telford J.L."/>
            <person name="Kasper D.L."/>
            <person name="Grandi G."/>
            <person name="Fraser C.M."/>
        </authorList>
    </citation>
    <scope>NUCLEOTIDE SEQUENCE [LARGE SCALE GENOMIC DNA]</scope>
    <source>
        <strain>ATCC BAA-611 / 2603 V/R</strain>
    </source>
</reference>
<sequence length="146" mass="15451">MKLHELKPAEGSRKVRNRVGRGTSSGNGKTSGRGQKGQKARSGGGVRLGFEGGQTPLFRRMPKRGFSNINAKEYALVNLDQLNVFEDGTEVTPVVLKEAGIVRAEKSGVKILGNGELTKKLSVKAAKFSKSAEAAITAKGGSIEVI</sequence>
<proteinExistence type="inferred from homology"/>
<comment type="function">
    <text evidence="1">Binds to the 23S rRNA.</text>
</comment>
<comment type="subunit">
    <text evidence="1">Part of the 50S ribosomal subunit.</text>
</comment>
<comment type="similarity">
    <text evidence="1">Belongs to the universal ribosomal protein uL15 family.</text>
</comment>
<dbReference type="EMBL" id="AE009948">
    <property type="protein sequence ID" value="AAM98985.1"/>
    <property type="molecule type" value="Genomic_DNA"/>
</dbReference>
<dbReference type="RefSeq" id="NP_687113.1">
    <property type="nucleotide sequence ID" value="NC_004116.1"/>
</dbReference>
<dbReference type="RefSeq" id="WP_000766093.1">
    <property type="nucleotide sequence ID" value="NC_004116.1"/>
</dbReference>
<dbReference type="SMR" id="Q8E2B5"/>
<dbReference type="STRING" id="208435.SAG0077"/>
<dbReference type="GeneID" id="66885037"/>
<dbReference type="KEGG" id="sag:SAG0077"/>
<dbReference type="PATRIC" id="fig|208435.3.peg.76"/>
<dbReference type="HOGENOM" id="CLU_055188_4_2_9"/>
<dbReference type="OrthoDB" id="9810293at2"/>
<dbReference type="Proteomes" id="UP000000821">
    <property type="component" value="Chromosome"/>
</dbReference>
<dbReference type="GO" id="GO:0022625">
    <property type="term" value="C:cytosolic large ribosomal subunit"/>
    <property type="evidence" value="ECO:0007669"/>
    <property type="project" value="TreeGrafter"/>
</dbReference>
<dbReference type="GO" id="GO:0019843">
    <property type="term" value="F:rRNA binding"/>
    <property type="evidence" value="ECO:0007669"/>
    <property type="project" value="UniProtKB-UniRule"/>
</dbReference>
<dbReference type="GO" id="GO:0003735">
    <property type="term" value="F:structural constituent of ribosome"/>
    <property type="evidence" value="ECO:0007669"/>
    <property type="project" value="InterPro"/>
</dbReference>
<dbReference type="GO" id="GO:0006412">
    <property type="term" value="P:translation"/>
    <property type="evidence" value="ECO:0007669"/>
    <property type="project" value="UniProtKB-UniRule"/>
</dbReference>
<dbReference type="Gene3D" id="3.100.10.10">
    <property type="match status" value="1"/>
</dbReference>
<dbReference type="HAMAP" id="MF_01341">
    <property type="entry name" value="Ribosomal_uL15"/>
    <property type="match status" value="1"/>
</dbReference>
<dbReference type="InterPro" id="IPR030878">
    <property type="entry name" value="Ribosomal_uL15"/>
</dbReference>
<dbReference type="InterPro" id="IPR021131">
    <property type="entry name" value="Ribosomal_uL15/eL18"/>
</dbReference>
<dbReference type="InterPro" id="IPR036227">
    <property type="entry name" value="Ribosomal_uL15/eL18_sf"/>
</dbReference>
<dbReference type="InterPro" id="IPR005749">
    <property type="entry name" value="Ribosomal_uL15_bac-type"/>
</dbReference>
<dbReference type="InterPro" id="IPR001196">
    <property type="entry name" value="Ribosomal_uL15_CS"/>
</dbReference>
<dbReference type="NCBIfam" id="TIGR01071">
    <property type="entry name" value="rplO_bact"/>
    <property type="match status" value="1"/>
</dbReference>
<dbReference type="PANTHER" id="PTHR12934">
    <property type="entry name" value="50S RIBOSOMAL PROTEIN L15"/>
    <property type="match status" value="1"/>
</dbReference>
<dbReference type="PANTHER" id="PTHR12934:SF11">
    <property type="entry name" value="LARGE RIBOSOMAL SUBUNIT PROTEIN UL15M"/>
    <property type="match status" value="1"/>
</dbReference>
<dbReference type="Pfam" id="PF00828">
    <property type="entry name" value="Ribosomal_L27A"/>
    <property type="match status" value="1"/>
</dbReference>
<dbReference type="SUPFAM" id="SSF52080">
    <property type="entry name" value="Ribosomal proteins L15p and L18e"/>
    <property type="match status" value="1"/>
</dbReference>
<dbReference type="PROSITE" id="PS00475">
    <property type="entry name" value="RIBOSOMAL_L15"/>
    <property type="match status" value="1"/>
</dbReference>
<organism>
    <name type="scientific">Streptococcus agalactiae serotype V (strain ATCC BAA-611 / 2603 V/R)</name>
    <dbReference type="NCBI Taxonomy" id="208435"/>
    <lineage>
        <taxon>Bacteria</taxon>
        <taxon>Bacillati</taxon>
        <taxon>Bacillota</taxon>
        <taxon>Bacilli</taxon>
        <taxon>Lactobacillales</taxon>
        <taxon>Streptococcaceae</taxon>
        <taxon>Streptococcus</taxon>
    </lineage>
</organism>
<name>RL15_STRA5</name>